<protein>
    <recommendedName>
        <fullName evidence="1">Exodeoxyribonuclease 7 large subunit</fullName>
        <ecNumber evidence="1">3.1.11.6</ecNumber>
    </recommendedName>
    <alternativeName>
        <fullName evidence="1">Exodeoxyribonuclease VII large subunit</fullName>
        <shortName evidence="1">Exonuclease VII large subunit</shortName>
    </alternativeName>
</protein>
<dbReference type="EC" id="3.1.11.6" evidence="1"/>
<dbReference type="EMBL" id="BX571868">
    <property type="protein sequence ID" value="CAE15088.1"/>
    <property type="molecule type" value="Genomic_DNA"/>
</dbReference>
<dbReference type="RefSeq" id="WP_011146935.1">
    <property type="nucleotide sequence ID" value="NC_005126.1"/>
</dbReference>
<dbReference type="SMR" id="Q7N3K2"/>
<dbReference type="STRING" id="243265.plu2714"/>
<dbReference type="GeneID" id="48848975"/>
<dbReference type="KEGG" id="plu:plu2714"/>
<dbReference type="eggNOG" id="COG1570">
    <property type="taxonomic scope" value="Bacteria"/>
</dbReference>
<dbReference type="HOGENOM" id="CLU_023625_3_1_6"/>
<dbReference type="OrthoDB" id="9802795at2"/>
<dbReference type="Proteomes" id="UP000002514">
    <property type="component" value="Chromosome"/>
</dbReference>
<dbReference type="GO" id="GO:0005737">
    <property type="term" value="C:cytoplasm"/>
    <property type="evidence" value="ECO:0007669"/>
    <property type="project" value="UniProtKB-SubCell"/>
</dbReference>
<dbReference type="GO" id="GO:0009318">
    <property type="term" value="C:exodeoxyribonuclease VII complex"/>
    <property type="evidence" value="ECO:0007669"/>
    <property type="project" value="InterPro"/>
</dbReference>
<dbReference type="GO" id="GO:0008855">
    <property type="term" value="F:exodeoxyribonuclease VII activity"/>
    <property type="evidence" value="ECO:0007669"/>
    <property type="project" value="UniProtKB-UniRule"/>
</dbReference>
<dbReference type="GO" id="GO:0003676">
    <property type="term" value="F:nucleic acid binding"/>
    <property type="evidence" value="ECO:0007669"/>
    <property type="project" value="InterPro"/>
</dbReference>
<dbReference type="GO" id="GO:0006308">
    <property type="term" value="P:DNA catabolic process"/>
    <property type="evidence" value="ECO:0007669"/>
    <property type="project" value="UniProtKB-UniRule"/>
</dbReference>
<dbReference type="CDD" id="cd04489">
    <property type="entry name" value="ExoVII_LU_OBF"/>
    <property type="match status" value="1"/>
</dbReference>
<dbReference type="HAMAP" id="MF_00378">
    <property type="entry name" value="Exonuc_7_L"/>
    <property type="match status" value="1"/>
</dbReference>
<dbReference type="InterPro" id="IPR003753">
    <property type="entry name" value="Exonuc_VII_L"/>
</dbReference>
<dbReference type="InterPro" id="IPR020579">
    <property type="entry name" value="Exonuc_VII_lsu_C"/>
</dbReference>
<dbReference type="InterPro" id="IPR025824">
    <property type="entry name" value="OB-fold_nuc-bd_dom"/>
</dbReference>
<dbReference type="NCBIfam" id="TIGR00237">
    <property type="entry name" value="xseA"/>
    <property type="match status" value="1"/>
</dbReference>
<dbReference type="PANTHER" id="PTHR30008">
    <property type="entry name" value="EXODEOXYRIBONUCLEASE 7 LARGE SUBUNIT"/>
    <property type="match status" value="1"/>
</dbReference>
<dbReference type="PANTHER" id="PTHR30008:SF0">
    <property type="entry name" value="EXODEOXYRIBONUCLEASE 7 LARGE SUBUNIT"/>
    <property type="match status" value="1"/>
</dbReference>
<dbReference type="Pfam" id="PF02601">
    <property type="entry name" value="Exonuc_VII_L"/>
    <property type="match status" value="1"/>
</dbReference>
<dbReference type="Pfam" id="PF13742">
    <property type="entry name" value="tRNA_anti_2"/>
    <property type="match status" value="1"/>
</dbReference>
<organism>
    <name type="scientific">Photorhabdus laumondii subsp. laumondii (strain DSM 15139 / CIP 105565 / TT01)</name>
    <name type="common">Photorhabdus luminescens subsp. laumondii</name>
    <dbReference type="NCBI Taxonomy" id="243265"/>
    <lineage>
        <taxon>Bacteria</taxon>
        <taxon>Pseudomonadati</taxon>
        <taxon>Pseudomonadota</taxon>
        <taxon>Gammaproteobacteria</taxon>
        <taxon>Enterobacterales</taxon>
        <taxon>Morganellaceae</taxon>
        <taxon>Photorhabdus</taxon>
    </lineage>
</organism>
<feature type="chain" id="PRO_0000273673" description="Exodeoxyribonuclease 7 large subunit">
    <location>
        <begin position="1"/>
        <end position="457"/>
    </location>
</feature>
<proteinExistence type="inferred from homology"/>
<evidence type="ECO:0000255" key="1">
    <source>
        <dbReference type="HAMAP-Rule" id="MF_00378"/>
    </source>
</evidence>
<accession>Q7N3K2</accession>
<reference key="1">
    <citation type="journal article" date="2003" name="Nat. Biotechnol.">
        <title>The genome sequence of the entomopathogenic bacterium Photorhabdus luminescens.</title>
        <authorList>
            <person name="Duchaud E."/>
            <person name="Rusniok C."/>
            <person name="Frangeul L."/>
            <person name="Buchrieser C."/>
            <person name="Givaudan A."/>
            <person name="Taourit S."/>
            <person name="Bocs S."/>
            <person name="Boursaux-Eude C."/>
            <person name="Chandler M."/>
            <person name="Charles J.-F."/>
            <person name="Dassa E."/>
            <person name="Derose R."/>
            <person name="Derzelle S."/>
            <person name="Freyssinet G."/>
            <person name="Gaudriault S."/>
            <person name="Medigue C."/>
            <person name="Lanois A."/>
            <person name="Powell K."/>
            <person name="Siguier P."/>
            <person name="Vincent R."/>
            <person name="Wingate V."/>
            <person name="Zouine M."/>
            <person name="Glaser P."/>
            <person name="Boemare N."/>
            <person name="Danchin A."/>
            <person name="Kunst F."/>
        </authorList>
    </citation>
    <scope>NUCLEOTIDE SEQUENCE [LARGE SCALE GENOMIC DNA]</scope>
    <source>
        <strain>DSM 15139 / CIP 105565 / TT01</strain>
    </source>
</reference>
<sequence length="457" mass="52332">MSLPFNTGIFSVSRLNQTVRQLLEMEMGRIWLSAEISNFSHPSSGHWYFTLKDERAQVRAAMFRSSNQRVTFRPQNGQQVLVRAIITLYEPRGDYQLIVENMQPAGDGLLQQQFELLKQKLDAEGLFDQSHKKPLPSPAQQLGVITSTSGAALHDILNILKRRDPSLPIIIYPTSVQGAEAPLQIIRAIELANERRECDVLIVGRGGGSLEDLWSFNDERVARAIFHSDIPIVSAVGHETDVTIADFVADLRAPTPSAAAELVSRNQLELLRQIQSQQQRLEMAMDYFFAQKQHIFSLLSHRLQQQHPHLRLARQQNLLVNLRQRLTDSLQRYLKQNSLAYEKLQQRLWYAEPSQQIHHYSQQIQQQDFRLRQAIERQISRSREKFAVSCSRMEAVSPLATLARGYSISQTSDGKLLKQTKQVDVGDVLNTRLQDGWIESEVLKIKKERKKRSANLK</sequence>
<gene>
    <name evidence="1" type="primary">xseA</name>
    <name type="ordered locus">plu2714</name>
</gene>
<keyword id="KW-0963">Cytoplasm</keyword>
<keyword id="KW-0269">Exonuclease</keyword>
<keyword id="KW-0378">Hydrolase</keyword>
<keyword id="KW-0540">Nuclease</keyword>
<keyword id="KW-1185">Reference proteome</keyword>
<comment type="function">
    <text evidence="1">Bidirectionally degrades single-stranded DNA into large acid-insoluble oligonucleotides, which are then degraded further into small acid-soluble oligonucleotides.</text>
</comment>
<comment type="catalytic activity">
    <reaction evidence="1">
        <text>Exonucleolytic cleavage in either 5'- to 3'- or 3'- to 5'-direction to yield nucleoside 5'-phosphates.</text>
        <dbReference type="EC" id="3.1.11.6"/>
    </reaction>
</comment>
<comment type="subunit">
    <text evidence="1">Heterooligomer composed of large and small subunits.</text>
</comment>
<comment type="subcellular location">
    <subcellularLocation>
        <location evidence="1">Cytoplasm</location>
    </subcellularLocation>
</comment>
<comment type="similarity">
    <text evidence="1">Belongs to the XseA family.</text>
</comment>
<name>EX7L_PHOLL</name>